<evidence type="ECO:0000256" key="1">
    <source>
        <dbReference type="SAM" id="MobiDB-lite"/>
    </source>
</evidence>
<accession>P13813</accession>
<proteinExistence type="evidence at transcript level"/>
<organism>
    <name type="scientific">Plasmodium knowlesi</name>
    <dbReference type="NCBI Taxonomy" id="5850"/>
    <lineage>
        <taxon>Eukaryota</taxon>
        <taxon>Sar</taxon>
        <taxon>Alveolata</taxon>
        <taxon>Apicomplexa</taxon>
        <taxon>Aconoidasida</taxon>
        <taxon>Haemosporida</taxon>
        <taxon>Plasmodiidae</taxon>
        <taxon>Plasmodium</taxon>
        <taxon>Plasmodium (Plasmodium)</taxon>
    </lineage>
</organism>
<sequence>FNSNMLRGSVCEEDVSLMTSIDNMIEEIDFYEKEIYKGSHSGGVIKGMDYDLEDDENDEDEMTEQMVEEVADHITQDMIDEVAHHVLDNITHDMAHMEEIVHGLSGDVTQIKEIVQKVNVAVEKVKHIVETEETQKTVEPEQIEETQNTVEPEQTEETQKTVEPEQTEETQNTVEPEQIEETQKTVEPEQTEEAQKTVEPEQTEETQKTVEPEQTEETQKTVEPEQTEETQKTVEPEQTEETQKTVEPEQTEETQKTVEPEQTEETQKTVEPEQTEETQNTVEPEPTQETQNTVEP</sequence>
<reference key="1">
    <citation type="journal article" date="1987" name="Mol. Biochem. Parasitol.">
        <title>Cloning and characterization of an abundant Plasmodium knowlesi antigen which cross reacts with Gambian sera.</title>
        <authorList>
            <person name="Perler F.B."/>
            <person name="Moon A.M."/>
            <person name="Qiang B.Q."/>
            <person name="Meda M."/>
            <person name="Dalton M."/>
            <person name="Card C."/>
            <person name="Schmidt-Ullrich R."/>
            <person name="Wallach D."/>
            <person name="Lynch J."/>
            <person name="Donelson J.E."/>
        </authorList>
    </citation>
    <scope>NUCLEOTIDE SEQUENCE [MRNA]</scope>
</reference>
<name>110KD_PLAKN</name>
<feature type="chain" id="PRO_0000217176" description="110 kDa antigen">
    <location>
        <begin position="1" status="less than"/>
        <end position="296"/>
    </location>
</feature>
<feature type="repeat" description="1; approximate">
    <location>
        <begin position="132"/>
        <end position="143"/>
    </location>
</feature>
<feature type="repeat" description="2; approximate">
    <location>
        <begin position="144"/>
        <end position="155"/>
    </location>
</feature>
<feature type="repeat" description="3">
    <location>
        <begin position="156"/>
        <end position="167"/>
    </location>
</feature>
<feature type="repeat" description="4; approximate">
    <location>
        <begin position="168"/>
        <end position="179"/>
    </location>
</feature>
<feature type="repeat" description="5">
    <location>
        <begin position="180"/>
        <end position="191"/>
    </location>
</feature>
<feature type="repeat" description="6; approximate">
    <location>
        <begin position="192"/>
        <end position="203"/>
    </location>
</feature>
<feature type="repeat" description="7">
    <location>
        <begin position="204"/>
        <end position="215"/>
    </location>
</feature>
<feature type="repeat" description="8">
    <location>
        <begin position="216"/>
        <end position="227"/>
    </location>
</feature>
<feature type="repeat" description="9">
    <location>
        <begin position="228"/>
        <end position="239"/>
    </location>
</feature>
<feature type="repeat" description="10">
    <location>
        <begin position="240"/>
        <end position="251"/>
    </location>
</feature>
<feature type="repeat" description="11">
    <location>
        <begin position="252"/>
        <end position="263"/>
    </location>
</feature>
<feature type="repeat" description="12">
    <location>
        <begin position="264"/>
        <end position="275"/>
    </location>
</feature>
<feature type="repeat" description="13; approximate">
    <location>
        <begin position="276"/>
        <end position="287"/>
    </location>
</feature>
<feature type="repeat" description="14; truncated">
    <location>
        <begin position="288"/>
        <end position="293"/>
    </location>
</feature>
<feature type="region of interest" description="13.5 X 12 AA approximate tandem repeats of E-E-T-Q-K-T-V-E-P-E-Q-T">
    <location>
        <begin position="132"/>
        <end position="296"/>
    </location>
</feature>
<feature type="region of interest" description="Disordered" evidence="1">
    <location>
        <begin position="133"/>
        <end position="296"/>
    </location>
</feature>
<feature type="compositionally biased region" description="Basic and acidic residues" evidence="1">
    <location>
        <begin position="181"/>
        <end position="271"/>
    </location>
</feature>
<feature type="compositionally biased region" description="Polar residues" evidence="1">
    <location>
        <begin position="277"/>
        <end position="296"/>
    </location>
</feature>
<feature type="non-terminal residue">
    <location>
        <position position="1"/>
    </location>
</feature>
<dbReference type="EMBL" id="M19152">
    <property type="protein sequence ID" value="AAA29471.1"/>
    <property type="molecule type" value="mRNA"/>
</dbReference>
<dbReference type="PIR" id="A54527">
    <property type="entry name" value="A54527"/>
</dbReference>
<dbReference type="VEuPathDB" id="PlasmoDB:PKA1H_140053500"/>
<dbReference type="VEuPathDB" id="PlasmoDB:PKNH_1448000"/>
<dbReference type="VEuPathDB" id="PlasmoDB:PKNOH_S140266100"/>
<dbReference type="eggNOG" id="ENOG502SDH0">
    <property type="taxonomic scope" value="Eukaryota"/>
</dbReference>
<protein>
    <recommendedName>
        <fullName>110 kDa antigen</fullName>
    </recommendedName>
    <alternativeName>
        <fullName>PK110</fullName>
    </alternativeName>
</protein>
<keyword id="KW-0461">Malaria</keyword>
<keyword id="KW-0677">Repeat</keyword>